<keyword id="KW-1003">Cell membrane</keyword>
<keyword id="KW-0472">Membrane</keyword>
<reference key="1">
    <citation type="journal article" date="2006" name="Proc. Natl. Acad. Sci. U.S.A.">
        <title>Comparative genomics of the lactic acid bacteria.</title>
        <authorList>
            <person name="Makarova K.S."/>
            <person name="Slesarev A."/>
            <person name="Wolf Y.I."/>
            <person name="Sorokin A."/>
            <person name="Mirkin B."/>
            <person name="Koonin E.V."/>
            <person name="Pavlov A."/>
            <person name="Pavlova N."/>
            <person name="Karamychev V."/>
            <person name="Polouchine N."/>
            <person name="Shakhova V."/>
            <person name="Grigoriev I."/>
            <person name="Lou Y."/>
            <person name="Rohksar D."/>
            <person name="Lucas S."/>
            <person name="Huang K."/>
            <person name="Goodstein D.M."/>
            <person name="Hawkins T."/>
            <person name="Plengvidhya V."/>
            <person name="Welker D."/>
            <person name="Hughes J."/>
            <person name="Goh Y."/>
            <person name="Benson A."/>
            <person name="Baldwin K."/>
            <person name="Lee J.-H."/>
            <person name="Diaz-Muniz I."/>
            <person name="Dosti B."/>
            <person name="Smeianov V."/>
            <person name="Wechter W."/>
            <person name="Barabote R."/>
            <person name="Lorca G."/>
            <person name="Altermann E."/>
            <person name="Barrangou R."/>
            <person name="Ganesan B."/>
            <person name="Xie Y."/>
            <person name="Rawsthorne H."/>
            <person name="Tamir D."/>
            <person name="Parker C."/>
            <person name="Breidt F."/>
            <person name="Broadbent J.R."/>
            <person name="Hutkins R."/>
            <person name="O'Sullivan D."/>
            <person name="Steele J."/>
            <person name="Unlu G."/>
            <person name="Saier M.H. Jr."/>
            <person name="Klaenhammer T."/>
            <person name="Richardson P."/>
            <person name="Kozyavkin S."/>
            <person name="Weimer B.C."/>
            <person name="Mills D.A."/>
        </authorList>
    </citation>
    <scope>NUCLEOTIDE SEQUENCE [LARGE SCALE GENOMIC DNA]</scope>
    <source>
        <strain>SK11</strain>
    </source>
</reference>
<protein>
    <recommendedName>
        <fullName evidence="1">Putative membrane protein insertion efficiency factor</fullName>
    </recommendedName>
</protein>
<comment type="function">
    <text evidence="1">Could be involved in insertion of integral membrane proteins into the membrane.</text>
</comment>
<comment type="subcellular location">
    <subcellularLocation>
        <location evidence="1">Cell membrane</location>
        <topology evidence="1">Peripheral membrane protein</topology>
        <orientation evidence="1">Cytoplasmic side</orientation>
    </subcellularLocation>
</comment>
<comment type="similarity">
    <text evidence="1">Belongs to the UPF0161 family.</text>
</comment>
<gene>
    <name type="ordered locus">LACR_1842</name>
</gene>
<accession>Q02XJ3</accession>
<dbReference type="EMBL" id="CP000425">
    <property type="protein sequence ID" value="ABJ73329.1"/>
    <property type="molecule type" value="Genomic_DNA"/>
</dbReference>
<dbReference type="KEGG" id="llc:LACR_1842"/>
<dbReference type="HOGENOM" id="CLU_144811_2_2_9"/>
<dbReference type="Proteomes" id="UP000000240">
    <property type="component" value="Chromosome"/>
</dbReference>
<dbReference type="GO" id="GO:0005886">
    <property type="term" value="C:plasma membrane"/>
    <property type="evidence" value="ECO:0007669"/>
    <property type="project" value="UniProtKB-SubCell"/>
</dbReference>
<dbReference type="HAMAP" id="MF_00386">
    <property type="entry name" value="UPF0161_YidD"/>
    <property type="match status" value="1"/>
</dbReference>
<dbReference type="InterPro" id="IPR002696">
    <property type="entry name" value="Membr_insert_effic_factor_YidD"/>
</dbReference>
<dbReference type="NCBIfam" id="TIGR00278">
    <property type="entry name" value="membrane protein insertion efficiency factor YidD"/>
    <property type="match status" value="1"/>
</dbReference>
<dbReference type="PANTHER" id="PTHR33383">
    <property type="entry name" value="MEMBRANE PROTEIN INSERTION EFFICIENCY FACTOR-RELATED"/>
    <property type="match status" value="1"/>
</dbReference>
<dbReference type="PANTHER" id="PTHR33383:SF1">
    <property type="entry name" value="MEMBRANE PROTEIN INSERTION EFFICIENCY FACTOR-RELATED"/>
    <property type="match status" value="1"/>
</dbReference>
<dbReference type="Pfam" id="PF01809">
    <property type="entry name" value="YidD"/>
    <property type="match status" value="1"/>
</dbReference>
<dbReference type="SMART" id="SM01234">
    <property type="entry name" value="Haemolytic"/>
    <property type="match status" value="1"/>
</dbReference>
<sequence>MKKVLVKAVHGYQRWISPVFPPACRYYPTCSNYMIQAIEKHGPAKGLAMGTARILRCHPFCQPGYDLVPKHFSLRRNWAEPEKKEEEDSK</sequence>
<evidence type="ECO:0000255" key="1">
    <source>
        <dbReference type="HAMAP-Rule" id="MF_00386"/>
    </source>
</evidence>
<feature type="chain" id="PRO_1000013097" description="Putative membrane protein insertion efficiency factor">
    <location>
        <begin position="1"/>
        <end position="90"/>
    </location>
</feature>
<organism>
    <name type="scientific">Lactococcus lactis subsp. cremoris (strain SK11)</name>
    <dbReference type="NCBI Taxonomy" id="272622"/>
    <lineage>
        <taxon>Bacteria</taxon>
        <taxon>Bacillati</taxon>
        <taxon>Bacillota</taxon>
        <taxon>Bacilli</taxon>
        <taxon>Lactobacillales</taxon>
        <taxon>Streptococcaceae</taxon>
        <taxon>Lactococcus</taxon>
        <taxon>Lactococcus cremoris subsp. cremoris</taxon>
    </lineage>
</organism>
<proteinExistence type="inferred from homology"/>
<name>YIDD_LACLS</name>